<gene>
    <name type="primary">glt1</name>
    <name type="ORF">SPAPB1E7.07</name>
</gene>
<keyword id="KW-0003">3Fe-4S</keyword>
<keyword id="KW-0028">Amino-acid biosynthesis</keyword>
<keyword id="KW-0963">Cytoplasm</keyword>
<keyword id="KW-0274">FAD</keyword>
<keyword id="KW-0285">Flavoprotein</keyword>
<keyword id="KW-0288">FMN</keyword>
<keyword id="KW-0314">Glutamate biosynthesis</keyword>
<keyword id="KW-0315">Glutamine amidotransferase</keyword>
<keyword id="KW-0408">Iron</keyword>
<keyword id="KW-0411">Iron-sulfur</keyword>
<keyword id="KW-0479">Metal-binding</keyword>
<keyword id="KW-0521">NADP</keyword>
<keyword id="KW-0560">Oxidoreductase</keyword>
<keyword id="KW-1185">Reference proteome</keyword>
<reference key="1">
    <citation type="journal article" date="2002" name="Nature">
        <title>The genome sequence of Schizosaccharomyces pombe.</title>
        <authorList>
            <person name="Wood V."/>
            <person name="Gwilliam R."/>
            <person name="Rajandream M.A."/>
            <person name="Lyne M.H."/>
            <person name="Lyne R."/>
            <person name="Stewart A."/>
            <person name="Sgouros J.G."/>
            <person name="Peat N."/>
            <person name="Hayles J."/>
            <person name="Baker S.G."/>
            <person name="Basham D."/>
            <person name="Bowman S."/>
            <person name="Brooks K."/>
            <person name="Brown D."/>
            <person name="Brown S."/>
            <person name="Chillingworth T."/>
            <person name="Churcher C.M."/>
            <person name="Collins M."/>
            <person name="Connor R."/>
            <person name="Cronin A."/>
            <person name="Davis P."/>
            <person name="Feltwell T."/>
            <person name="Fraser A."/>
            <person name="Gentles S."/>
            <person name="Goble A."/>
            <person name="Hamlin N."/>
            <person name="Harris D.E."/>
            <person name="Hidalgo J."/>
            <person name="Hodgson G."/>
            <person name="Holroyd S."/>
            <person name="Hornsby T."/>
            <person name="Howarth S."/>
            <person name="Huckle E.J."/>
            <person name="Hunt S."/>
            <person name="Jagels K."/>
            <person name="James K.D."/>
            <person name="Jones L."/>
            <person name="Jones M."/>
            <person name="Leather S."/>
            <person name="McDonald S."/>
            <person name="McLean J."/>
            <person name="Mooney P."/>
            <person name="Moule S."/>
            <person name="Mungall K.L."/>
            <person name="Murphy L.D."/>
            <person name="Niblett D."/>
            <person name="Odell C."/>
            <person name="Oliver K."/>
            <person name="O'Neil S."/>
            <person name="Pearson D."/>
            <person name="Quail M.A."/>
            <person name="Rabbinowitsch E."/>
            <person name="Rutherford K.M."/>
            <person name="Rutter S."/>
            <person name="Saunders D."/>
            <person name="Seeger K."/>
            <person name="Sharp S."/>
            <person name="Skelton J."/>
            <person name="Simmonds M.N."/>
            <person name="Squares R."/>
            <person name="Squares S."/>
            <person name="Stevens K."/>
            <person name="Taylor K."/>
            <person name="Taylor R.G."/>
            <person name="Tivey A."/>
            <person name="Walsh S.V."/>
            <person name="Warren T."/>
            <person name="Whitehead S."/>
            <person name="Woodward J.R."/>
            <person name="Volckaert G."/>
            <person name="Aert R."/>
            <person name="Robben J."/>
            <person name="Grymonprez B."/>
            <person name="Weltjens I."/>
            <person name="Vanstreels E."/>
            <person name="Rieger M."/>
            <person name="Schaefer M."/>
            <person name="Mueller-Auer S."/>
            <person name="Gabel C."/>
            <person name="Fuchs M."/>
            <person name="Duesterhoeft A."/>
            <person name="Fritzc C."/>
            <person name="Holzer E."/>
            <person name="Moestl D."/>
            <person name="Hilbert H."/>
            <person name="Borzym K."/>
            <person name="Langer I."/>
            <person name="Beck A."/>
            <person name="Lehrach H."/>
            <person name="Reinhardt R."/>
            <person name="Pohl T.M."/>
            <person name="Eger P."/>
            <person name="Zimmermann W."/>
            <person name="Wedler H."/>
            <person name="Wambutt R."/>
            <person name="Purnelle B."/>
            <person name="Goffeau A."/>
            <person name="Cadieu E."/>
            <person name="Dreano S."/>
            <person name="Gloux S."/>
            <person name="Lelaure V."/>
            <person name="Mottier S."/>
            <person name="Galibert F."/>
            <person name="Aves S.J."/>
            <person name="Xiang Z."/>
            <person name="Hunt C."/>
            <person name="Moore K."/>
            <person name="Hurst S.M."/>
            <person name="Lucas M."/>
            <person name="Rochet M."/>
            <person name="Gaillardin C."/>
            <person name="Tallada V.A."/>
            <person name="Garzon A."/>
            <person name="Thode G."/>
            <person name="Daga R.R."/>
            <person name="Cruzado L."/>
            <person name="Jimenez J."/>
            <person name="Sanchez M."/>
            <person name="del Rey F."/>
            <person name="Benito J."/>
            <person name="Dominguez A."/>
            <person name="Revuelta J.L."/>
            <person name="Moreno S."/>
            <person name="Armstrong J."/>
            <person name="Forsburg S.L."/>
            <person name="Cerutti L."/>
            <person name="Lowe T."/>
            <person name="McCombie W.R."/>
            <person name="Paulsen I."/>
            <person name="Potashkin J."/>
            <person name="Shpakovski G.V."/>
            <person name="Ussery D."/>
            <person name="Barrell B.G."/>
            <person name="Nurse P."/>
        </authorList>
    </citation>
    <scope>NUCLEOTIDE SEQUENCE [LARGE SCALE GENOMIC DNA]</scope>
    <source>
        <strain>972 / ATCC 24843</strain>
    </source>
</reference>
<reference key="2">
    <citation type="journal article" date="1997" name="DNA Res.">
        <title>Identification of open reading frames in Schizosaccharomyces pombe cDNAs.</title>
        <authorList>
            <person name="Yoshioka S."/>
            <person name="Kato K."/>
            <person name="Nakai K."/>
            <person name="Okayama H."/>
            <person name="Nojima H."/>
        </authorList>
    </citation>
    <scope>NUCLEOTIDE SEQUENCE [LARGE SCALE MRNA] OF 1923-2111</scope>
    <source>
        <strain>PR745</strain>
    </source>
</reference>
<reference key="3">
    <citation type="journal article" date="1995" name="Curr. Microbiol.">
        <title>Glutamine synthetase/glutamate synthase ammonium-assimilating pathway in Schizosaccharomyces pombe.</title>
        <authorList>
            <person name="Perysinakis A."/>
            <person name="Kinghorn J.R."/>
            <person name="Drainas C."/>
        </authorList>
    </citation>
    <scope>FUNCTION</scope>
    <scope>CATALYTIC ACTIVITY</scope>
    <scope>BIOPHYSICOCHEMICAL PROPERTIES</scope>
    <scope>ACTIVITY REGULATION</scope>
</reference>
<reference key="4">
    <citation type="journal article" date="2006" name="Nat. Biotechnol.">
        <title>ORFeome cloning and global analysis of protein localization in the fission yeast Schizosaccharomyces pombe.</title>
        <authorList>
            <person name="Matsuyama A."/>
            <person name="Arai R."/>
            <person name="Yashiroda Y."/>
            <person name="Shirai A."/>
            <person name="Kamata A."/>
            <person name="Sekido S."/>
            <person name="Kobayashi Y."/>
            <person name="Hashimoto A."/>
            <person name="Hamamoto M."/>
            <person name="Hiraoka Y."/>
            <person name="Horinouchi S."/>
            <person name="Yoshida M."/>
        </authorList>
    </citation>
    <scope>SUBCELLULAR LOCATION [LARGE SCALE ANALYSIS]</scope>
</reference>
<evidence type="ECO:0000250" key="1"/>
<evidence type="ECO:0000250" key="2">
    <source>
        <dbReference type="UniProtKB" id="Q12680"/>
    </source>
</evidence>
<evidence type="ECO:0000255" key="3">
    <source>
        <dbReference type="PROSITE-ProRule" id="PRU00609"/>
    </source>
</evidence>
<evidence type="ECO:0000256" key="4">
    <source>
        <dbReference type="SAM" id="MobiDB-lite"/>
    </source>
</evidence>
<evidence type="ECO:0000269" key="5">
    <source>
    </source>
</evidence>
<evidence type="ECO:0000269" key="6">
    <source>
    </source>
</evidence>
<evidence type="ECO:0000303" key="7">
    <source>
    </source>
</evidence>
<evidence type="ECO:0000305" key="8"/>
<proteinExistence type="evidence at protein level"/>
<comment type="function">
    <text evidence="6">Forms L-glutamate from L-glutamine and 2-oxoglutarate. Represents an alternative pathway to L-glutamate dehydrogenase for the biosynthesis of L-glutamate (PubMed:7773104). Participates with glutamine synthetase in ammonia assimilation processes (PubMed:7773104). The enzyme is specific for NADH, L-glutamine and 2-oxoglutarate (PubMed:7773104).</text>
</comment>
<comment type="catalytic activity">
    <reaction evidence="6">
        <text>2 L-glutamate + NAD(+) = L-glutamine + 2-oxoglutarate + NADH + H(+)</text>
        <dbReference type="Rhea" id="RHEA:13753"/>
        <dbReference type="ChEBI" id="CHEBI:15378"/>
        <dbReference type="ChEBI" id="CHEBI:16810"/>
        <dbReference type="ChEBI" id="CHEBI:29985"/>
        <dbReference type="ChEBI" id="CHEBI:57540"/>
        <dbReference type="ChEBI" id="CHEBI:57945"/>
        <dbReference type="ChEBI" id="CHEBI:58359"/>
        <dbReference type="EC" id="1.4.1.14"/>
    </reaction>
</comment>
<comment type="cofactor">
    <cofactor evidence="2">
        <name>[3Fe-4S] cluster</name>
        <dbReference type="ChEBI" id="CHEBI:21137"/>
    </cofactor>
    <text evidence="2">Binds 1 [3Fe-4S] cluster.</text>
</comment>
<comment type="cofactor">
    <cofactor evidence="2">
        <name>FAD</name>
        <dbReference type="ChEBI" id="CHEBI:57692"/>
    </cofactor>
</comment>
<comment type="cofactor">
    <cofactor evidence="2">
        <name>FMN</name>
        <dbReference type="ChEBI" id="CHEBI:58210"/>
    </cofactor>
</comment>
<comment type="activity regulation">
    <text evidence="6">In the presence of 10 mM allantoin, the activity is reduced more than 25%.</text>
</comment>
<comment type="biophysicochemical properties">
    <kinetics>
        <KM evidence="6">0.5 mM for glutamine</KM>
        <KM evidence="6">0.07 mM for alpha-ketoglutarate</KM>
        <Vmax evidence="6">0.05 umol/min/mg enzyme</Vmax>
    </kinetics>
    <phDependence>
        <text evidence="6">Optimum pH is 6.35.</text>
    </phDependence>
    <temperatureDependence>
        <text evidence="6">Optimum temperature is 40 degrees Celsius.</text>
    </temperatureDependence>
</comment>
<comment type="pathway">
    <text evidence="6">Amino-acid biosynthesis; L-glutamate biosynthesis via GLT pathway; L-glutamate from 2-oxoglutarate and L-glutamine (NAD(+) route): step 1/1.</text>
</comment>
<comment type="pathway">
    <text evidence="6">Energy metabolism; nitrogen metabolism.</text>
</comment>
<comment type="subunit">
    <text evidence="2">Homotrimer.</text>
</comment>
<comment type="subcellular location">
    <subcellularLocation>
        <location evidence="5">Cytoplasm</location>
    </subcellularLocation>
</comment>
<comment type="similarity">
    <text evidence="8">Belongs to the glutamate synthase family.</text>
</comment>
<accession>Q9C102</accession>
<accession>P78816</accession>
<name>GLT1_SCHPO</name>
<organism>
    <name type="scientific">Schizosaccharomyces pombe (strain 972 / ATCC 24843)</name>
    <name type="common">Fission yeast</name>
    <dbReference type="NCBI Taxonomy" id="284812"/>
    <lineage>
        <taxon>Eukaryota</taxon>
        <taxon>Fungi</taxon>
        <taxon>Dikarya</taxon>
        <taxon>Ascomycota</taxon>
        <taxon>Taphrinomycotina</taxon>
        <taxon>Schizosaccharomycetes</taxon>
        <taxon>Schizosaccharomycetales</taxon>
        <taxon>Schizosaccharomycetaceae</taxon>
        <taxon>Schizosaccharomyces</taxon>
    </lineage>
</organism>
<feature type="chain" id="PRO_0000170789" description="Glutamate synthase [NADH]">
    <location>
        <begin position="1"/>
        <end position="2111"/>
    </location>
</feature>
<feature type="domain" description="Glutamine amidotransferase type-2" evidence="3">
    <location>
        <begin position="69"/>
        <end position="469"/>
    </location>
</feature>
<feature type="region of interest" description="Disordered" evidence="4">
    <location>
        <begin position="969"/>
        <end position="990"/>
    </location>
</feature>
<feature type="active site" description="Nucleophile" evidence="3">
    <location>
        <position position="69"/>
    </location>
</feature>
<feature type="binding site" evidence="1">
    <location>
        <begin position="1139"/>
        <end position="1191"/>
    </location>
    <ligand>
        <name>FMN</name>
        <dbReference type="ChEBI" id="CHEBI:58210"/>
    </ligand>
</feature>
<feature type="binding site" evidence="1">
    <location>
        <position position="1192"/>
    </location>
    <ligand>
        <name>[3Fe-4S] cluster</name>
        <dbReference type="ChEBI" id="CHEBI:21137"/>
    </ligand>
</feature>
<feature type="binding site" evidence="1">
    <location>
        <position position="1198"/>
    </location>
    <ligand>
        <name>[3Fe-4S] cluster</name>
        <dbReference type="ChEBI" id="CHEBI:21137"/>
    </ligand>
</feature>
<feature type="binding site" evidence="1">
    <location>
        <position position="1203"/>
    </location>
    <ligand>
        <name>[3Fe-4S] cluster</name>
        <dbReference type="ChEBI" id="CHEBI:21137"/>
    </ligand>
</feature>
<feature type="sequence conflict" description="In Ref. 2; BAA13827." evidence="8" ref="2">
    <original>CRR</original>
    <variation>SA</variation>
    <location>
        <begin position="2067"/>
        <end position="2069"/>
    </location>
</feature>
<dbReference type="EC" id="1.4.1.14" evidence="6"/>
<dbReference type="EMBL" id="CU329670">
    <property type="protein sequence ID" value="CAC36924.1"/>
    <property type="molecule type" value="Genomic_DNA"/>
</dbReference>
<dbReference type="EMBL" id="D89165">
    <property type="protein sequence ID" value="BAA13827.1"/>
    <property type="molecule type" value="mRNA"/>
</dbReference>
<dbReference type="PIR" id="T42527">
    <property type="entry name" value="T42527"/>
</dbReference>
<dbReference type="RefSeq" id="NP_594133.1">
    <property type="nucleotide sequence ID" value="NM_001019557.2"/>
</dbReference>
<dbReference type="SMR" id="Q9C102"/>
<dbReference type="BioGRID" id="279927">
    <property type="interactions" value="5"/>
</dbReference>
<dbReference type="FunCoup" id="Q9C102">
    <property type="interactions" value="198"/>
</dbReference>
<dbReference type="STRING" id="284812.Q9C102"/>
<dbReference type="iPTMnet" id="Q9C102"/>
<dbReference type="PaxDb" id="4896-SPAPB1E7.07.1"/>
<dbReference type="EnsemblFungi" id="SPAPB1E7.07.1">
    <property type="protein sequence ID" value="SPAPB1E7.07.1:pep"/>
    <property type="gene ID" value="SPAPB1E7.07"/>
</dbReference>
<dbReference type="GeneID" id="2543509"/>
<dbReference type="KEGG" id="spo:2543509"/>
<dbReference type="PomBase" id="SPAPB1E7.07">
    <property type="gene designation" value="glt1"/>
</dbReference>
<dbReference type="VEuPathDB" id="FungiDB:SPAPB1E7.07"/>
<dbReference type="eggNOG" id="KOG0399">
    <property type="taxonomic scope" value="Eukaryota"/>
</dbReference>
<dbReference type="HOGENOM" id="CLU_000422_8_2_1"/>
<dbReference type="InParanoid" id="Q9C102"/>
<dbReference type="OMA" id="WDGPAAM"/>
<dbReference type="PhylomeDB" id="Q9C102"/>
<dbReference type="UniPathway" id="UPA00045"/>
<dbReference type="UniPathway" id="UPA00634">
    <property type="reaction ID" value="UER00690"/>
</dbReference>
<dbReference type="PRO" id="PR:Q9C102"/>
<dbReference type="Proteomes" id="UP000002485">
    <property type="component" value="Chromosome I"/>
</dbReference>
<dbReference type="GO" id="GO:0005829">
    <property type="term" value="C:cytosol"/>
    <property type="evidence" value="ECO:0007005"/>
    <property type="project" value="PomBase"/>
</dbReference>
<dbReference type="GO" id="GO:0005739">
    <property type="term" value="C:mitochondrion"/>
    <property type="evidence" value="ECO:0000266"/>
    <property type="project" value="PomBase"/>
</dbReference>
<dbReference type="GO" id="GO:0051538">
    <property type="term" value="F:3 iron, 4 sulfur cluster binding"/>
    <property type="evidence" value="ECO:0007669"/>
    <property type="project" value="UniProtKB-KW"/>
</dbReference>
<dbReference type="GO" id="GO:0050660">
    <property type="term" value="F:flavin adenine dinucleotide binding"/>
    <property type="evidence" value="ECO:0007669"/>
    <property type="project" value="InterPro"/>
</dbReference>
<dbReference type="GO" id="GO:0010181">
    <property type="term" value="F:FMN binding"/>
    <property type="evidence" value="ECO:0007669"/>
    <property type="project" value="InterPro"/>
</dbReference>
<dbReference type="GO" id="GO:0016040">
    <property type="term" value="F:glutamate synthase (NADH) activity"/>
    <property type="evidence" value="ECO:0000314"/>
    <property type="project" value="PomBase"/>
</dbReference>
<dbReference type="GO" id="GO:0005506">
    <property type="term" value="F:iron ion binding"/>
    <property type="evidence" value="ECO:0007669"/>
    <property type="project" value="InterPro"/>
</dbReference>
<dbReference type="GO" id="GO:0016639">
    <property type="term" value="F:oxidoreductase activity, acting on the CH-NH2 group of donors, NAD or NADP as acceptor"/>
    <property type="evidence" value="ECO:0007669"/>
    <property type="project" value="InterPro"/>
</dbReference>
<dbReference type="GO" id="GO:0019676">
    <property type="term" value="P:ammonia assimilation cycle"/>
    <property type="evidence" value="ECO:0000315"/>
    <property type="project" value="PomBase"/>
</dbReference>
<dbReference type="GO" id="GO:0006537">
    <property type="term" value="P:glutamate biosynthetic process"/>
    <property type="evidence" value="ECO:0000318"/>
    <property type="project" value="GO_Central"/>
</dbReference>
<dbReference type="GO" id="GO:0097054">
    <property type="term" value="P:L-glutamate biosynthetic process"/>
    <property type="evidence" value="ECO:0000314"/>
    <property type="project" value="PomBase"/>
</dbReference>
<dbReference type="CDD" id="cd00982">
    <property type="entry name" value="gltB_C"/>
    <property type="match status" value="1"/>
</dbReference>
<dbReference type="CDD" id="cd00713">
    <property type="entry name" value="GltS"/>
    <property type="match status" value="1"/>
</dbReference>
<dbReference type="CDD" id="cd02808">
    <property type="entry name" value="GltS_FMN"/>
    <property type="match status" value="1"/>
</dbReference>
<dbReference type="FunFam" id="3.20.20.70:FF:000031">
    <property type="entry name" value="Glutamate synthase 1 [NADH]"/>
    <property type="match status" value="1"/>
</dbReference>
<dbReference type="FunFam" id="3.20.20.70:FF:000017">
    <property type="entry name" value="Glutamate synthase [NADH], amyloplastic"/>
    <property type="match status" value="1"/>
</dbReference>
<dbReference type="FunFam" id="3.40.50.720:FF:000113">
    <property type="entry name" value="Glutamate synthase [NADH], amyloplastic"/>
    <property type="match status" value="1"/>
</dbReference>
<dbReference type="FunFam" id="3.50.50.60:FF:000022">
    <property type="entry name" value="Glutamate synthase [NADH], amyloplastic"/>
    <property type="match status" value="1"/>
</dbReference>
<dbReference type="FunFam" id="2.160.20.60:FF:000001">
    <property type="entry name" value="Glutamate synthase, large subunit"/>
    <property type="match status" value="1"/>
</dbReference>
<dbReference type="FunFam" id="3.60.20.10:FF:000001">
    <property type="entry name" value="Glutamate synthase, large subunit"/>
    <property type="match status" value="1"/>
</dbReference>
<dbReference type="Gene3D" id="3.20.20.70">
    <property type="entry name" value="Aldolase class I"/>
    <property type="match status" value="2"/>
</dbReference>
<dbReference type="Gene3D" id="1.10.1060.10">
    <property type="entry name" value="Alpha-helical ferredoxin"/>
    <property type="match status" value="1"/>
</dbReference>
<dbReference type="Gene3D" id="3.50.50.60">
    <property type="entry name" value="FAD/NAD(P)-binding domain"/>
    <property type="match status" value="1"/>
</dbReference>
<dbReference type="Gene3D" id="2.160.20.60">
    <property type="entry name" value="Glutamate synthase, alpha subunit, C-terminal domain"/>
    <property type="match status" value="1"/>
</dbReference>
<dbReference type="Gene3D" id="3.60.20.10">
    <property type="entry name" value="Glutamine Phosphoribosylpyrophosphate, subunit 1, domain 1"/>
    <property type="match status" value="1"/>
</dbReference>
<dbReference type="Gene3D" id="3.40.50.720">
    <property type="entry name" value="NAD(P)-binding Rossmann-like Domain"/>
    <property type="match status" value="1"/>
</dbReference>
<dbReference type="InterPro" id="IPR013785">
    <property type="entry name" value="Aldolase_TIM"/>
</dbReference>
<dbReference type="InterPro" id="IPR028261">
    <property type="entry name" value="DPD_II"/>
</dbReference>
<dbReference type="InterPro" id="IPR036188">
    <property type="entry name" value="FAD/NAD-bd_sf"/>
</dbReference>
<dbReference type="InterPro" id="IPR023753">
    <property type="entry name" value="FAD/NAD-binding_dom"/>
</dbReference>
<dbReference type="InterPro" id="IPR017932">
    <property type="entry name" value="GATase_2_dom"/>
</dbReference>
<dbReference type="InterPro" id="IPR002489">
    <property type="entry name" value="Glu_synth_asu_C"/>
</dbReference>
<dbReference type="InterPro" id="IPR036485">
    <property type="entry name" value="Glu_synth_asu_C_sf"/>
</dbReference>
<dbReference type="InterPro" id="IPR006982">
    <property type="entry name" value="Glu_synth_centr_N"/>
</dbReference>
<dbReference type="InterPro" id="IPR012220">
    <property type="entry name" value="Glu_synth_euk"/>
</dbReference>
<dbReference type="InterPro" id="IPR002932">
    <property type="entry name" value="Glu_synthdom"/>
</dbReference>
<dbReference type="InterPro" id="IPR006005">
    <property type="entry name" value="Glut_synth_ssu1"/>
</dbReference>
<dbReference type="InterPro" id="IPR051394">
    <property type="entry name" value="Glutamate_Synthase"/>
</dbReference>
<dbReference type="InterPro" id="IPR009051">
    <property type="entry name" value="Helical_ferredxn"/>
</dbReference>
<dbReference type="InterPro" id="IPR029055">
    <property type="entry name" value="Ntn_hydrolases_N"/>
</dbReference>
<dbReference type="NCBIfam" id="TIGR01317">
    <property type="entry name" value="GOGAT_sm_gam"/>
    <property type="match status" value="1"/>
</dbReference>
<dbReference type="NCBIfam" id="NF008730">
    <property type="entry name" value="PRK11750.1"/>
    <property type="match status" value="1"/>
</dbReference>
<dbReference type="PANTHER" id="PTHR43100">
    <property type="entry name" value="GLUTAMATE SYNTHASE [NADPH] SMALL CHAIN"/>
    <property type="match status" value="1"/>
</dbReference>
<dbReference type="PANTHER" id="PTHR43100:SF1">
    <property type="entry name" value="GLUTAMATE SYNTHASE [NADPH] SMALL CHAIN"/>
    <property type="match status" value="1"/>
</dbReference>
<dbReference type="Pfam" id="PF14691">
    <property type="entry name" value="Fer4_20"/>
    <property type="match status" value="1"/>
</dbReference>
<dbReference type="Pfam" id="PF00310">
    <property type="entry name" value="GATase_2"/>
    <property type="match status" value="1"/>
</dbReference>
<dbReference type="Pfam" id="PF04898">
    <property type="entry name" value="Glu_syn_central"/>
    <property type="match status" value="1"/>
</dbReference>
<dbReference type="Pfam" id="PF01645">
    <property type="entry name" value="Glu_synthase"/>
    <property type="match status" value="1"/>
</dbReference>
<dbReference type="Pfam" id="PF01493">
    <property type="entry name" value="GXGXG"/>
    <property type="match status" value="1"/>
</dbReference>
<dbReference type="Pfam" id="PF07992">
    <property type="entry name" value="Pyr_redox_2"/>
    <property type="match status" value="1"/>
</dbReference>
<dbReference type="PIRSF" id="PIRSF000187">
    <property type="entry name" value="GOGAT"/>
    <property type="match status" value="1"/>
</dbReference>
<dbReference type="PRINTS" id="PR00419">
    <property type="entry name" value="ADXRDTASE"/>
</dbReference>
<dbReference type="SUPFAM" id="SSF69336">
    <property type="entry name" value="Alpha subunit of glutamate synthase, C-terminal domain"/>
    <property type="match status" value="1"/>
</dbReference>
<dbReference type="SUPFAM" id="SSF46548">
    <property type="entry name" value="alpha-helical ferredoxin"/>
    <property type="match status" value="1"/>
</dbReference>
<dbReference type="SUPFAM" id="SSF51395">
    <property type="entry name" value="FMN-linked oxidoreductases"/>
    <property type="match status" value="1"/>
</dbReference>
<dbReference type="SUPFAM" id="SSF56235">
    <property type="entry name" value="N-terminal nucleophile aminohydrolases (Ntn hydrolases)"/>
    <property type="match status" value="1"/>
</dbReference>
<dbReference type="SUPFAM" id="SSF51971">
    <property type="entry name" value="Nucleotide-binding domain"/>
    <property type="match status" value="1"/>
</dbReference>
<dbReference type="PROSITE" id="PS51278">
    <property type="entry name" value="GATASE_TYPE_2"/>
    <property type="match status" value="1"/>
</dbReference>
<sequence length="2111" mass="232849">MAVLSSVQPINHNSALVEARDEQVNTTACSDDLLNAPPYEYDTEGNPSWAGALPKAQALYDPAYEKDSCGVGFTCHIKGQVSHKIVTDARLLLCNMTHRGATGADTRDGDGAGVMTGMPYTFMQKEFGQIGCTLPKSGEYAIGNVFFSPEADVCREAMTAFTQVAEKLGLAILAWRSVPCDNSILGPAALSREPTILQPCVVLKAAYDGEAEFDTDLFERQLYVLRKQSSHLIGKEKWFYICSLHRETIVYKGQLAPVQVYNYFLDLNNAEYVSHFALVHSRFSTNTFPSWDRAQPMRLAAHNGEINTLRGNKNWMHAREGLMKSSRFGEEFASLLPIIERGGSDSAAFDNVIELLCASGVVSLPEAVMLLIPEAWQNDKNISDEKAAFYEWAACQMEPWDGPALFTFADGRYCGANLDRNGLRPCRFYLTSDDMMICASEVGTVGIEPDRIVQKGRLYPGRMLLVDTKEGRIVDDKELKHNIASRYDFRSWLDQELIDMNSIVDSLIESTSVDLTPIVDDVPLADDKTMLAFGYTLEQINMIMAPMANGGKETLGSMGNDAAIACLSDQPRLLYDYFRQLFAQVTNPPIDPIREAIVMSLQCYIGPSGNLLEINQSQCRRLRMPTPILTVEEFNALKNVDRIYPDWKVASIDITFFKSEGVAGYAAAIERICSEADTAVNEGYKAIVLSDRNVNSERVPLASIAACGAVHHYLVQNKLRSRVALVCESGDAREVHHMCTLLGYGADAVCPYLAMEALTKLVRQNAMKPGITEETAIKNFKHAINGGILKVMSKMGISTLQSYKGAQIFEALGIDNEVINKCFLGTASRIRGVTFEHIALDAFALHERGYPTDQSIRSLQIPDMGDFYYRDGGEQHVNHPKAIASLQDAVRNKNEAAYAEFSRTHYEQTRRCTLRGMLDFDFDSSQAIPIEQVEPWTEIVRRFCTGAMSYGSISMESHSSLAIAMNRLGGKSNTGEGGEDPARSQRLANGDTMRSAIKQIASGRFGVTSWYLSDADELQIKMAQGAKPGEGGELPGNKVSESIAKTRHSTAGVGLISPPPHHDIYSIEDLKQLIYDMKSANPRARVSVKLVSEVGVGIVASGVAKAKADHILVSGHDGGTGASRWTGIKYAGLPWELGVAETHQTLVLNDLRGRVVIQTDGQIRTGRDVAIACLLGAEEWGFATTPLIALGCIMMRKCHLNTCPVGIATQDPELRKKFEGQPEHVVNFFYYVAEELRGIMAKLGFRTINEMVGRSDKLKVAEPINNKSKLLDLTPLLTPAFTLRPGAATYNVRKQDHRLYTRLDNKLIDEAEVTLEEGIPSVVECEIINTDRTLGATLSNKISKRYGEEGLPTDSIRVNVFGSAGQSFGAFLAPGVTLQLEGDCNDYVGKGLSGGRLIIYPPRVSPFKPEENMIIGNVCLYGATSGHAFISGVAAERFAVRNSGAIAVVEGVGDHGCEYMTGGRVVILGSTGRNFAAGMSGGIAYVYDMQMDFAGKINTEMVDISSVTDAAEIAFLRGLIQDHRHYTGSQVADRILSDFPRHLSRFVKVLPREYKAVLEREAAKKEEAKRLQYPKAFMPGNPIRQQIEETNAQIADVEDTLGATVKKSAPLDKLRGFMKYQRRSEHYRNPLKRTNDWKELSVRLREDELRVQTARCMDCGTPFCQSDYGCPISNKIFTWNDLVFKQQWKEALTQLLLTNNFPEFTGRVCPAPCEGACTLGIIESPVGIKSVERAIIDKAWEEGWIVPRPPAERTGRRVAIIGSGPAGLAAADQLNRAGHHVVIYERADRPGGLLQYGIPNMKLDKKVVERRIQLMIDEGIEVLTNVEVGKNGDVSLDELHKVYDAVVLASGSTVPRDLPIPNRDSKGIHFAMEFLHKNTKSLLDSELKDGNYISAKGKDVIVIGGGDTGNDCLGTSVRHGAKSVRNLELLPIPPRERAFDNPWPQYPRVFRVDYGHAEVQAHYGQDFREYSILTKSFEKDEDGNVKGINTVRIEWTKNSKGRWIMKEIRNSEEFFPADLVILALGFLGPEEQATAGMNVDRDARSNISTPTKSYETSVPGIYAAGDCRRGQSLVVWGIQEGRQCAREIDLKFQGKTFLPGDGGLVKRTVNC</sequence>
<protein>
    <recommendedName>
        <fullName evidence="7">Glutamate synthase [NADH]</fullName>
        <ecNumber evidence="6">1.4.1.14</ecNumber>
    </recommendedName>
    <alternativeName>
        <fullName evidence="7">Glutamine-oxoglutarate aminotransferase</fullName>
        <shortName evidence="7">GOGAT</shortName>
    </alternativeName>
</protein>